<organism>
    <name type="scientific">Chlamydia abortus (strain DSM 27085 / S26/3)</name>
    <name type="common">Chlamydophila abortus</name>
    <dbReference type="NCBI Taxonomy" id="218497"/>
    <lineage>
        <taxon>Bacteria</taxon>
        <taxon>Pseudomonadati</taxon>
        <taxon>Chlamydiota</taxon>
        <taxon>Chlamydiia</taxon>
        <taxon>Chlamydiales</taxon>
        <taxon>Chlamydiaceae</taxon>
        <taxon>Chlamydia/Chlamydophila group</taxon>
        <taxon>Chlamydia</taxon>
    </lineage>
</organism>
<name>TRUB_CHLAB</name>
<keyword id="KW-0413">Isomerase</keyword>
<keyword id="KW-0819">tRNA processing</keyword>
<feature type="chain" id="PRO_0000229348" description="tRNA pseudouridine synthase B">
    <location>
        <begin position="1"/>
        <end position="235"/>
    </location>
</feature>
<feature type="active site" description="Nucleophile" evidence="1">
    <location>
        <position position="45"/>
    </location>
</feature>
<dbReference type="EC" id="5.4.99.25" evidence="1"/>
<dbReference type="EMBL" id="CR848038">
    <property type="protein sequence ID" value="CAH63902.1"/>
    <property type="molecule type" value="Genomic_DNA"/>
</dbReference>
<dbReference type="RefSeq" id="WP_006344093.1">
    <property type="nucleotide sequence ID" value="NC_004552.2"/>
</dbReference>
<dbReference type="SMR" id="Q5L629"/>
<dbReference type="GeneID" id="93025012"/>
<dbReference type="KEGG" id="cab:CAB449"/>
<dbReference type="eggNOG" id="COG0130">
    <property type="taxonomic scope" value="Bacteria"/>
</dbReference>
<dbReference type="HOGENOM" id="CLU_032087_2_0_0"/>
<dbReference type="OrthoDB" id="9802309at2"/>
<dbReference type="Proteomes" id="UP000001012">
    <property type="component" value="Chromosome"/>
</dbReference>
<dbReference type="GO" id="GO:0003723">
    <property type="term" value="F:RNA binding"/>
    <property type="evidence" value="ECO:0007669"/>
    <property type="project" value="InterPro"/>
</dbReference>
<dbReference type="GO" id="GO:0160148">
    <property type="term" value="F:tRNA pseudouridine(55) synthase activity"/>
    <property type="evidence" value="ECO:0007669"/>
    <property type="project" value="UniProtKB-EC"/>
</dbReference>
<dbReference type="GO" id="GO:1990481">
    <property type="term" value="P:mRNA pseudouridine synthesis"/>
    <property type="evidence" value="ECO:0007669"/>
    <property type="project" value="TreeGrafter"/>
</dbReference>
<dbReference type="GO" id="GO:0031119">
    <property type="term" value="P:tRNA pseudouridine synthesis"/>
    <property type="evidence" value="ECO:0007669"/>
    <property type="project" value="UniProtKB-UniRule"/>
</dbReference>
<dbReference type="CDD" id="cd02573">
    <property type="entry name" value="PseudoU_synth_EcTruB"/>
    <property type="match status" value="1"/>
</dbReference>
<dbReference type="Gene3D" id="3.30.2350.10">
    <property type="entry name" value="Pseudouridine synthase"/>
    <property type="match status" value="1"/>
</dbReference>
<dbReference type="HAMAP" id="MF_01080">
    <property type="entry name" value="TruB_bact"/>
    <property type="match status" value="1"/>
</dbReference>
<dbReference type="InterPro" id="IPR020103">
    <property type="entry name" value="PsdUridine_synth_cat_dom_sf"/>
</dbReference>
<dbReference type="InterPro" id="IPR002501">
    <property type="entry name" value="PsdUridine_synth_N"/>
</dbReference>
<dbReference type="InterPro" id="IPR014780">
    <property type="entry name" value="tRNA_psdUridine_synth_TruB"/>
</dbReference>
<dbReference type="InterPro" id="IPR032819">
    <property type="entry name" value="TruB_C"/>
</dbReference>
<dbReference type="NCBIfam" id="TIGR00431">
    <property type="entry name" value="TruB"/>
    <property type="match status" value="1"/>
</dbReference>
<dbReference type="PANTHER" id="PTHR13767:SF2">
    <property type="entry name" value="PSEUDOURIDYLATE SYNTHASE TRUB1"/>
    <property type="match status" value="1"/>
</dbReference>
<dbReference type="PANTHER" id="PTHR13767">
    <property type="entry name" value="TRNA-PSEUDOURIDINE SYNTHASE"/>
    <property type="match status" value="1"/>
</dbReference>
<dbReference type="Pfam" id="PF16198">
    <property type="entry name" value="TruB_C_2"/>
    <property type="match status" value="1"/>
</dbReference>
<dbReference type="Pfam" id="PF01509">
    <property type="entry name" value="TruB_N"/>
    <property type="match status" value="1"/>
</dbReference>
<dbReference type="SUPFAM" id="SSF55120">
    <property type="entry name" value="Pseudouridine synthase"/>
    <property type="match status" value="1"/>
</dbReference>
<sequence>MELATELKEGILLIDKPQGRTSFSLIRTLTKLIGVKKIGHAGTLDPFATGVMVMLIGRRFTRLSDVLLFEDKEYAAVAHLGTTTDSYDCDGKIVGRSKKIPTYEEILEASQYFQGEIQQIPPMFSAKKVNGKKLYEYARKGLSIERRQSTVQVSLQITKYEYPLLHFSIQCSKGTYIRSIAHELGNMLGCGAYLEELRRLRSGSFSIDQCIDGCLLDCPDFDISPYLRDFNGNML</sequence>
<comment type="function">
    <text evidence="1">Responsible for synthesis of pseudouridine from uracil-55 in the psi GC loop of transfer RNAs.</text>
</comment>
<comment type="catalytic activity">
    <reaction evidence="1">
        <text>uridine(55) in tRNA = pseudouridine(55) in tRNA</text>
        <dbReference type="Rhea" id="RHEA:42532"/>
        <dbReference type="Rhea" id="RHEA-COMP:10101"/>
        <dbReference type="Rhea" id="RHEA-COMP:10102"/>
        <dbReference type="ChEBI" id="CHEBI:65314"/>
        <dbReference type="ChEBI" id="CHEBI:65315"/>
        <dbReference type="EC" id="5.4.99.25"/>
    </reaction>
</comment>
<comment type="similarity">
    <text evidence="1">Belongs to the pseudouridine synthase TruB family. Type 1 subfamily.</text>
</comment>
<gene>
    <name evidence="1" type="primary">truB</name>
    <name type="ordered locus">CAB449</name>
</gene>
<proteinExistence type="inferred from homology"/>
<reference key="1">
    <citation type="journal article" date="2005" name="Genome Res.">
        <title>The Chlamydophila abortus genome sequence reveals an array of variable proteins that contribute to interspecies variation.</title>
        <authorList>
            <person name="Thomson N.R."/>
            <person name="Yeats C."/>
            <person name="Bell K."/>
            <person name="Holden M.T.G."/>
            <person name="Bentley S.D."/>
            <person name="Livingstone M."/>
            <person name="Cerdeno-Tarraga A.-M."/>
            <person name="Harris B."/>
            <person name="Doggett J."/>
            <person name="Ormond D."/>
            <person name="Mungall K."/>
            <person name="Clarke K."/>
            <person name="Feltwell T."/>
            <person name="Hance Z."/>
            <person name="Sanders M."/>
            <person name="Quail M.A."/>
            <person name="Price C."/>
            <person name="Barrell B.G."/>
            <person name="Parkhill J."/>
            <person name="Longbottom D."/>
        </authorList>
    </citation>
    <scope>NUCLEOTIDE SEQUENCE [LARGE SCALE GENOMIC DNA]</scope>
    <source>
        <strain>DSM 27085 / S26/3</strain>
    </source>
</reference>
<evidence type="ECO:0000255" key="1">
    <source>
        <dbReference type="HAMAP-Rule" id="MF_01080"/>
    </source>
</evidence>
<protein>
    <recommendedName>
        <fullName evidence="1">tRNA pseudouridine synthase B</fullName>
        <ecNumber evidence="1">5.4.99.25</ecNumber>
    </recommendedName>
    <alternativeName>
        <fullName evidence="1">tRNA pseudouridine(55) synthase</fullName>
        <shortName evidence="1">Psi55 synthase</shortName>
    </alternativeName>
    <alternativeName>
        <fullName evidence="1">tRNA pseudouridylate synthase</fullName>
    </alternativeName>
    <alternativeName>
        <fullName evidence="1">tRNA-uridine isomerase</fullName>
    </alternativeName>
</protein>
<accession>Q5L629</accession>